<dbReference type="EC" id="3.6.5.-" evidence="1"/>
<dbReference type="EMBL" id="CP000698">
    <property type="protein sequence ID" value="ABQ24522.1"/>
    <property type="molecule type" value="Genomic_DNA"/>
</dbReference>
<dbReference type="RefSeq" id="WP_011937249.1">
    <property type="nucleotide sequence ID" value="NC_009483.1"/>
</dbReference>
<dbReference type="SMR" id="A5GD29"/>
<dbReference type="STRING" id="351605.Gura_0306"/>
<dbReference type="KEGG" id="gur:Gura_0306"/>
<dbReference type="HOGENOM" id="CLU_011747_2_3_7"/>
<dbReference type="OrthoDB" id="9807318at2"/>
<dbReference type="Proteomes" id="UP000006695">
    <property type="component" value="Chromosome"/>
</dbReference>
<dbReference type="GO" id="GO:0005737">
    <property type="term" value="C:cytoplasm"/>
    <property type="evidence" value="ECO:0007669"/>
    <property type="project" value="UniProtKB-SubCell"/>
</dbReference>
<dbReference type="GO" id="GO:0005525">
    <property type="term" value="F:GTP binding"/>
    <property type="evidence" value="ECO:0007669"/>
    <property type="project" value="UniProtKB-UniRule"/>
</dbReference>
<dbReference type="GO" id="GO:0003924">
    <property type="term" value="F:GTPase activity"/>
    <property type="evidence" value="ECO:0007669"/>
    <property type="project" value="UniProtKB-UniRule"/>
</dbReference>
<dbReference type="GO" id="GO:0000287">
    <property type="term" value="F:magnesium ion binding"/>
    <property type="evidence" value="ECO:0007669"/>
    <property type="project" value="InterPro"/>
</dbReference>
<dbReference type="GO" id="GO:0042254">
    <property type="term" value="P:ribosome biogenesis"/>
    <property type="evidence" value="ECO:0007669"/>
    <property type="project" value="UniProtKB-UniRule"/>
</dbReference>
<dbReference type="CDD" id="cd01898">
    <property type="entry name" value="Obg"/>
    <property type="match status" value="1"/>
</dbReference>
<dbReference type="FunFam" id="2.70.210.12:FF:000001">
    <property type="entry name" value="GTPase Obg"/>
    <property type="match status" value="1"/>
</dbReference>
<dbReference type="Gene3D" id="2.70.210.12">
    <property type="entry name" value="GTP1/OBG domain"/>
    <property type="match status" value="1"/>
</dbReference>
<dbReference type="Gene3D" id="3.40.50.300">
    <property type="entry name" value="P-loop containing nucleotide triphosphate hydrolases"/>
    <property type="match status" value="1"/>
</dbReference>
<dbReference type="HAMAP" id="MF_01454">
    <property type="entry name" value="GTPase_Obg"/>
    <property type="match status" value="1"/>
</dbReference>
<dbReference type="InterPro" id="IPR031167">
    <property type="entry name" value="G_OBG"/>
</dbReference>
<dbReference type="InterPro" id="IPR006073">
    <property type="entry name" value="GTP-bd"/>
</dbReference>
<dbReference type="InterPro" id="IPR014100">
    <property type="entry name" value="GTP-bd_Obg/CgtA"/>
</dbReference>
<dbReference type="InterPro" id="IPR006074">
    <property type="entry name" value="GTP1-OBG_CS"/>
</dbReference>
<dbReference type="InterPro" id="IPR006169">
    <property type="entry name" value="GTP1_OBG_dom"/>
</dbReference>
<dbReference type="InterPro" id="IPR036726">
    <property type="entry name" value="GTP1_OBG_dom_sf"/>
</dbReference>
<dbReference type="InterPro" id="IPR045086">
    <property type="entry name" value="OBG_GTPase"/>
</dbReference>
<dbReference type="InterPro" id="IPR027417">
    <property type="entry name" value="P-loop_NTPase"/>
</dbReference>
<dbReference type="NCBIfam" id="TIGR02729">
    <property type="entry name" value="Obg_CgtA"/>
    <property type="match status" value="1"/>
</dbReference>
<dbReference type="NCBIfam" id="NF008954">
    <property type="entry name" value="PRK12296.1"/>
    <property type="match status" value="1"/>
</dbReference>
<dbReference type="NCBIfam" id="NF008955">
    <property type="entry name" value="PRK12297.1"/>
    <property type="match status" value="1"/>
</dbReference>
<dbReference type="NCBIfam" id="NF008956">
    <property type="entry name" value="PRK12299.1"/>
    <property type="match status" value="1"/>
</dbReference>
<dbReference type="PANTHER" id="PTHR11702">
    <property type="entry name" value="DEVELOPMENTALLY REGULATED GTP-BINDING PROTEIN-RELATED"/>
    <property type="match status" value="1"/>
</dbReference>
<dbReference type="PANTHER" id="PTHR11702:SF31">
    <property type="entry name" value="MITOCHONDRIAL RIBOSOME-ASSOCIATED GTPASE 2"/>
    <property type="match status" value="1"/>
</dbReference>
<dbReference type="Pfam" id="PF01018">
    <property type="entry name" value="GTP1_OBG"/>
    <property type="match status" value="1"/>
</dbReference>
<dbReference type="Pfam" id="PF01926">
    <property type="entry name" value="MMR_HSR1"/>
    <property type="match status" value="1"/>
</dbReference>
<dbReference type="PIRSF" id="PIRSF002401">
    <property type="entry name" value="GTP_bd_Obg/CgtA"/>
    <property type="match status" value="1"/>
</dbReference>
<dbReference type="PRINTS" id="PR00326">
    <property type="entry name" value="GTP1OBG"/>
</dbReference>
<dbReference type="SUPFAM" id="SSF82051">
    <property type="entry name" value="Obg GTP-binding protein N-terminal domain"/>
    <property type="match status" value="1"/>
</dbReference>
<dbReference type="SUPFAM" id="SSF52540">
    <property type="entry name" value="P-loop containing nucleoside triphosphate hydrolases"/>
    <property type="match status" value="1"/>
</dbReference>
<dbReference type="PROSITE" id="PS51710">
    <property type="entry name" value="G_OBG"/>
    <property type="match status" value="1"/>
</dbReference>
<dbReference type="PROSITE" id="PS00905">
    <property type="entry name" value="GTP1_OBG"/>
    <property type="match status" value="1"/>
</dbReference>
<dbReference type="PROSITE" id="PS51883">
    <property type="entry name" value="OBG"/>
    <property type="match status" value="1"/>
</dbReference>
<protein>
    <recommendedName>
        <fullName evidence="1">GTPase Obg</fullName>
        <ecNumber evidence="1">3.6.5.-</ecNumber>
    </recommendedName>
    <alternativeName>
        <fullName evidence="1">GTP-binding protein Obg</fullName>
    </alternativeName>
</protein>
<name>OBG_GEOUR</name>
<sequence length="338" mass="36706">MSFIDEVKIHVKSGDGGAGCVSFRREKFIPLGGPDGGDGGKGGNVIVEASPNLSTLLDLRQHPHQKAGRGRNGMGKDRHGAYGADLKMLLPVGTVIKDAETDEVLVDLNEPGMSVVLLKGGRGGQGNARFASSTNKAPKFAQPGEPGEERWLRLELKLMADVGLLGMPSVGKSSLISKISAARPKIADYHFTTLKPNLGVVAYKNYKSFVMADIPGLIEGAHEGAGLGHRFLKHLERTGQLIHILDISWMPDRDPLREYEAINRELALFNPELAEKKQIIVINKIDLPVVKENLATVLPYFEERGLKVFPISAATGEGIPALLDEIARNLWGQAEEEW</sequence>
<feature type="chain" id="PRO_0000385955" description="GTPase Obg">
    <location>
        <begin position="1"/>
        <end position="338"/>
    </location>
</feature>
<feature type="domain" description="Obg" evidence="2">
    <location>
        <begin position="1"/>
        <end position="159"/>
    </location>
</feature>
<feature type="domain" description="OBG-type G" evidence="1">
    <location>
        <begin position="160"/>
        <end position="331"/>
    </location>
</feature>
<feature type="binding site" evidence="1">
    <location>
        <begin position="166"/>
        <end position="173"/>
    </location>
    <ligand>
        <name>GTP</name>
        <dbReference type="ChEBI" id="CHEBI:37565"/>
    </ligand>
</feature>
<feature type="binding site" evidence="1">
    <location>
        <position position="173"/>
    </location>
    <ligand>
        <name>Mg(2+)</name>
        <dbReference type="ChEBI" id="CHEBI:18420"/>
    </ligand>
</feature>
<feature type="binding site" evidence="1">
    <location>
        <begin position="191"/>
        <end position="195"/>
    </location>
    <ligand>
        <name>GTP</name>
        <dbReference type="ChEBI" id="CHEBI:37565"/>
    </ligand>
</feature>
<feature type="binding site" evidence="1">
    <location>
        <position position="193"/>
    </location>
    <ligand>
        <name>Mg(2+)</name>
        <dbReference type="ChEBI" id="CHEBI:18420"/>
    </ligand>
</feature>
<feature type="binding site" evidence="1">
    <location>
        <begin position="213"/>
        <end position="216"/>
    </location>
    <ligand>
        <name>GTP</name>
        <dbReference type="ChEBI" id="CHEBI:37565"/>
    </ligand>
</feature>
<feature type="binding site" evidence="1">
    <location>
        <begin position="283"/>
        <end position="286"/>
    </location>
    <ligand>
        <name>GTP</name>
        <dbReference type="ChEBI" id="CHEBI:37565"/>
    </ligand>
</feature>
<feature type="binding site" evidence="1">
    <location>
        <begin position="312"/>
        <end position="314"/>
    </location>
    <ligand>
        <name>GTP</name>
        <dbReference type="ChEBI" id="CHEBI:37565"/>
    </ligand>
</feature>
<reference key="1">
    <citation type="submission" date="2007-05" db="EMBL/GenBank/DDBJ databases">
        <title>Complete sequence of Geobacter uraniireducens Rf4.</title>
        <authorList>
            <consortium name="US DOE Joint Genome Institute"/>
            <person name="Copeland A."/>
            <person name="Lucas S."/>
            <person name="Lapidus A."/>
            <person name="Barry K."/>
            <person name="Detter J.C."/>
            <person name="Glavina del Rio T."/>
            <person name="Hammon N."/>
            <person name="Israni S."/>
            <person name="Dalin E."/>
            <person name="Tice H."/>
            <person name="Pitluck S."/>
            <person name="Chertkov O."/>
            <person name="Brettin T."/>
            <person name="Bruce D."/>
            <person name="Han C."/>
            <person name="Schmutz J."/>
            <person name="Larimer F."/>
            <person name="Land M."/>
            <person name="Hauser L."/>
            <person name="Kyrpides N."/>
            <person name="Mikhailova N."/>
            <person name="Shelobolina E."/>
            <person name="Aklujkar M."/>
            <person name="Lovley D."/>
            <person name="Richardson P."/>
        </authorList>
    </citation>
    <scope>NUCLEOTIDE SEQUENCE [LARGE SCALE GENOMIC DNA]</scope>
    <source>
        <strain>ATCC BAA-1134 / JCM 13001 / Rf4</strain>
    </source>
</reference>
<evidence type="ECO:0000255" key="1">
    <source>
        <dbReference type="HAMAP-Rule" id="MF_01454"/>
    </source>
</evidence>
<evidence type="ECO:0000255" key="2">
    <source>
        <dbReference type="PROSITE-ProRule" id="PRU01231"/>
    </source>
</evidence>
<organism>
    <name type="scientific">Geotalea uraniireducens (strain Rf4)</name>
    <name type="common">Geobacter uraniireducens</name>
    <dbReference type="NCBI Taxonomy" id="351605"/>
    <lineage>
        <taxon>Bacteria</taxon>
        <taxon>Pseudomonadati</taxon>
        <taxon>Thermodesulfobacteriota</taxon>
        <taxon>Desulfuromonadia</taxon>
        <taxon>Geobacterales</taxon>
        <taxon>Geobacteraceae</taxon>
        <taxon>Geotalea</taxon>
    </lineage>
</organism>
<gene>
    <name evidence="1" type="primary">obg</name>
    <name type="ordered locus">Gura_0306</name>
</gene>
<comment type="function">
    <text evidence="1">An essential GTPase which binds GTP, GDP and possibly (p)ppGpp with moderate affinity, with high nucleotide exchange rates and a fairly low GTP hydrolysis rate. Plays a role in control of the cell cycle, stress response, ribosome biogenesis and in those bacteria that undergo differentiation, in morphogenesis control.</text>
</comment>
<comment type="cofactor">
    <cofactor evidence="1">
        <name>Mg(2+)</name>
        <dbReference type="ChEBI" id="CHEBI:18420"/>
    </cofactor>
</comment>
<comment type="subunit">
    <text evidence="1">Monomer.</text>
</comment>
<comment type="subcellular location">
    <subcellularLocation>
        <location evidence="1">Cytoplasm</location>
    </subcellularLocation>
</comment>
<comment type="similarity">
    <text evidence="1">Belongs to the TRAFAC class OBG-HflX-like GTPase superfamily. OBG GTPase family.</text>
</comment>
<keyword id="KW-0963">Cytoplasm</keyword>
<keyword id="KW-0342">GTP-binding</keyword>
<keyword id="KW-0378">Hydrolase</keyword>
<keyword id="KW-0460">Magnesium</keyword>
<keyword id="KW-0479">Metal-binding</keyword>
<keyword id="KW-0547">Nucleotide-binding</keyword>
<keyword id="KW-1185">Reference proteome</keyword>
<proteinExistence type="inferred from homology"/>
<accession>A5GD29</accession>